<evidence type="ECO:0000255" key="1">
    <source>
        <dbReference type="HAMAP-Rule" id="MF_00627"/>
    </source>
</evidence>
<sequence>MKALSKLKAEVGIWMTDVPAPELGHNDLLIKIRKTAICGTDMHIYNWDEWAQKTIPVPMVVGHEYVGEVVAVGQEVRGFAVGDRVSGEGHITCGHCRNCRAGRTHLCRNTIGVGVNRPGSFAEYLVIPAFNAFKLPDNIPDELAAIFDPFGNAVHTALSFDLVGEDVLITGAGPIGIMAAAVCRHVGARHVVITDVNEYRLELARKMGATRAVNVSKEKLADVMSALGMTEGFDVGLEMSGVPSAFQDMIDKMNHGGKIAMLGIPPSTMAIDWNKVIFKGLFIKGIYGREMFETWYKMASLIQSGLDLTPIITHHFHIDDFQQGFEAMGSGKSGKVILSWDK</sequence>
<reference key="1">
    <citation type="journal article" date="2008" name="BMC Genomics">
        <title>The genome of Aeromonas salmonicida subsp. salmonicida A449: insights into the evolution of a fish pathogen.</title>
        <authorList>
            <person name="Reith M.E."/>
            <person name="Singh R.K."/>
            <person name="Curtis B."/>
            <person name="Boyd J.M."/>
            <person name="Bouevitch A."/>
            <person name="Kimball J."/>
            <person name="Munholland J."/>
            <person name="Murphy C."/>
            <person name="Sarty D."/>
            <person name="Williams J."/>
            <person name="Nash J.H."/>
            <person name="Johnson S.C."/>
            <person name="Brown L.L."/>
        </authorList>
    </citation>
    <scope>NUCLEOTIDE SEQUENCE [LARGE SCALE GENOMIC DNA]</scope>
    <source>
        <strain>A449</strain>
    </source>
</reference>
<protein>
    <recommendedName>
        <fullName evidence="1">L-threonine 3-dehydrogenase</fullName>
        <shortName evidence="1">TDH</shortName>
        <ecNumber evidence="1">1.1.1.103</ecNumber>
    </recommendedName>
</protein>
<accession>A4SHB7</accession>
<proteinExistence type="inferred from homology"/>
<gene>
    <name evidence="1" type="primary">tdh</name>
    <name type="ordered locus">ASA_0090</name>
</gene>
<keyword id="KW-0963">Cytoplasm</keyword>
<keyword id="KW-0479">Metal-binding</keyword>
<keyword id="KW-0520">NAD</keyword>
<keyword id="KW-0560">Oxidoreductase</keyword>
<keyword id="KW-0862">Zinc</keyword>
<comment type="function">
    <text evidence="1">Catalyzes the NAD(+)-dependent oxidation of L-threonine to 2-amino-3-ketobutyrate.</text>
</comment>
<comment type="catalytic activity">
    <reaction evidence="1">
        <text>L-threonine + NAD(+) = (2S)-2-amino-3-oxobutanoate + NADH + H(+)</text>
        <dbReference type="Rhea" id="RHEA:13161"/>
        <dbReference type="ChEBI" id="CHEBI:15378"/>
        <dbReference type="ChEBI" id="CHEBI:57540"/>
        <dbReference type="ChEBI" id="CHEBI:57926"/>
        <dbReference type="ChEBI" id="CHEBI:57945"/>
        <dbReference type="ChEBI" id="CHEBI:78948"/>
        <dbReference type="EC" id="1.1.1.103"/>
    </reaction>
</comment>
<comment type="cofactor">
    <cofactor evidence="1">
        <name>Zn(2+)</name>
        <dbReference type="ChEBI" id="CHEBI:29105"/>
    </cofactor>
    <text evidence="1">Binds 2 Zn(2+) ions per subunit.</text>
</comment>
<comment type="pathway">
    <text evidence="1">Amino-acid degradation; L-threonine degradation via oxydo-reductase pathway; glycine from L-threonine: step 1/2.</text>
</comment>
<comment type="subunit">
    <text evidence="1">Homotetramer.</text>
</comment>
<comment type="subcellular location">
    <subcellularLocation>
        <location evidence="1">Cytoplasm</location>
    </subcellularLocation>
</comment>
<comment type="similarity">
    <text evidence="1">Belongs to the zinc-containing alcohol dehydrogenase family.</text>
</comment>
<organism>
    <name type="scientific">Aeromonas salmonicida (strain A449)</name>
    <dbReference type="NCBI Taxonomy" id="382245"/>
    <lineage>
        <taxon>Bacteria</taxon>
        <taxon>Pseudomonadati</taxon>
        <taxon>Pseudomonadota</taxon>
        <taxon>Gammaproteobacteria</taxon>
        <taxon>Aeromonadales</taxon>
        <taxon>Aeromonadaceae</taxon>
        <taxon>Aeromonas</taxon>
    </lineage>
</organism>
<dbReference type="EC" id="1.1.1.103" evidence="1"/>
<dbReference type="EMBL" id="CP000644">
    <property type="protein sequence ID" value="ABO88289.1"/>
    <property type="molecule type" value="Genomic_DNA"/>
</dbReference>
<dbReference type="RefSeq" id="WP_005318146.1">
    <property type="nucleotide sequence ID" value="NC_009348.1"/>
</dbReference>
<dbReference type="SMR" id="A4SHB7"/>
<dbReference type="STRING" id="29491.GCA_000820065_04150"/>
<dbReference type="KEGG" id="asa:ASA_0090"/>
<dbReference type="eggNOG" id="COG1063">
    <property type="taxonomic scope" value="Bacteria"/>
</dbReference>
<dbReference type="HOGENOM" id="CLU_026673_11_0_6"/>
<dbReference type="UniPathway" id="UPA00046">
    <property type="reaction ID" value="UER00505"/>
</dbReference>
<dbReference type="Proteomes" id="UP000000225">
    <property type="component" value="Chromosome"/>
</dbReference>
<dbReference type="GO" id="GO:0005737">
    <property type="term" value="C:cytoplasm"/>
    <property type="evidence" value="ECO:0007669"/>
    <property type="project" value="UniProtKB-SubCell"/>
</dbReference>
<dbReference type="GO" id="GO:0008743">
    <property type="term" value="F:L-threonine 3-dehydrogenase activity"/>
    <property type="evidence" value="ECO:0007669"/>
    <property type="project" value="UniProtKB-UniRule"/>
</dbReference>
<dbReference type="GO" id="GO:0008270">
    <property type="term" value="F:zinc ion binding"/>
    <property type="evidence" value="ECO:0007669"/>
    <property type="project" value="UniProtKB-UniRule"/>
</dbReference>
<dbReference type="GO" id="GO:0019518">
    <property type="term" value="P:L-threonine catabolic process to glycine"/>
    <property type="evidence" value="ECO:0007669"/>
    <property type="project" value="UniProtKB-UniPathway"/>
</dbReference>
<dbReference type="Gene3D" id="3.90.180.10">
    <property type="entry name" value="Medium-chain alcohol dehydrogenases, catalytic domain"/>
    <property type="match status" value="1"/>
</dbReference>
<dbReference type="Gene3D" id="3.40.50.720">
    <property type="entry name" value="NAD(P)-binding Rossmann-like Domain"/>
    <property type="match status" value="1"/>
</dbReference>
<dbReference type="HAMAP" id="MF_00627">
    <property type="entry name" value="Thr_dehydrog"/>
    <property type="match status" value="1"/>
</dbReference>
<dbReference type="InterPro" id="IPR013149">
    <property type="entry name" value="ADH-like_C"/>
</dbReference>
<dbReference type="InterPro" id="IPR013154">
    <property type="entry name" value="ADH-like_N"/>
</dbReference>
<dbReference type="InterPro" id="IPR002328">
    <property type="entry name" value="ADH_Zn_CS"/>
</dbReference>
<dbReference type="InterPro" id="IPR011032">
    <property type="entry name" value="GroES-like_sf"/>
</dbReference>
<dbReference type="InterPro" id="IPR004627">
    <property type="entry name" value="L-Threonine_3-DHase"/>
</dbReference>
<dbReference type="InterPro" id="IPR036291">
    <property type="entry name" value="NAD(P)-bd_dom_sf"/>
</dbReference>
<dbReference type="InterPro" id="IPR020843">
    <property type="entry name" value="PKS_ER"/>
</dbReference>
<dbReference type="InterPro" id="IPR050129">
    <property type="entry name" value="Zn_alcohol_dh"/>
</dbReference>
<dbReference type="NCBIfam" id="NF003808">
    <property type="entry name" value="PRK05396.1"/>
    <property type="match status" value="1"/>
</dbReference>
<dbReference type="NCBIfam" id="TIGR00692">
    <property type="entry name" value="tdh"/>
    <property type="match status" value="1"/>
</dbReference>
<dbReference type="PANTHER" id="PTHR43401">
    <property type="entry name" value="L-THREONINE 3-DEHYDROGENASE"/>
    <property type="match status" value="1"/>
</dbReference>
<dbReference type="PANTHER" id="PTHR43401:SF2">
    <property type="entry name" value="L-THREONINE 3-DEHYDROGENASE"/>
    <property type="match status" value="1"/>
</dbReference>
<dbReference type="Pfam" id="PF08240">
    <property type="entry name" value="ADH_N"/>
    <property type="match status" value="1"/>
</dbReference>
<dbReference type="Pfam" id="PF00107">
    <property type="entry name" value="ADH_zinc_N"/>
    <property type="match status" value="1"/>
</dbReference>
<dbReference type="SMART" id="SM00829">
    <property type="entry name" value="PKS_ER"/>
    <property type="match status" value="1"/>
</dbReference>
<dbReference type="SUPFAM" id="SSF50129">
    <property type="entry name" value="GroES-like"/>
    <property type="match status" value="1"/>
</dbReference>
<dbReference type="SUPFAM" id="SSF51735">
    <property type="entry name" value="NAD(P)-binding Rossmann-fold domains"/>
    <property type="match status" value="1"/>
</dbReference>
<dbReference type="PROSITE" id="PS00059">
    <property type="entry name" value="ADH_ZINC"/>
    <property type="match status" value="1"/>
</dbReference>
<feature type="chain" id="PRO_1000051613" description="L-threonine 3-dehydrogenase">
    <location>
        <begin position="1"/>
        <end position="342"/>
    </location>
</feature>
<feature type="active site" description="Charge relay system" evidence="1">
    <location>
        <position position="40"/>
    </location>
</feature>
<feature type="active site" description="Charge relay system" evidence="1">
    <location>
        <position position="43"/>
    </location>
</feature>
<feature type="binding site" evidence="1">
    <location>
        <position position="38"/>
    </location>
    <ligand>
        <name>Zn(2+)</name>
        <dbReference type="ChEBI" id="CHEBI:29105"/>
        <label>1</label>
        <note>catalytic</note>
    </ligand>
</feature>
<feature type="binding site" evidence="1">
    <location>
        <position position="63"/>
    </location>
    <ligand>
        <name>Zn(2+)</name>
        <dbReference type="ChEBI" id="CHEBI:29105"/>
        <label>1</label>
        <note>catalytic</note>
    </ligand>
</feature>
<feature type="binding site" evidence="1">
    <location>
        <position position="64"/>
    </location>
    <ligand>
        <name>Zn(2+)</name>
        <dbReference type="ChEBI" id="CHEBI:29105"/>
        <label>1</label>
        <note>catalytic</note>
    </ligand>
</feature>
<feature type="binding site" evidence="1">
    <location>
        <position position="93"/>
    </location>
    <ligand>
        <name>Zn(2+)</name>
        <dbReference type="ChEBI" id="CHEBI:29105"/>
        <label>2</label>
    </ligand>
</feature>
<feature type="binding site" evidence="1">
    <location>
        <position position="96"/>
    </location>
    <ligand>
        <name>Zn(2+)</name>
        <dbReference type="ChEBI" id="CHEBI:29105"/>
        <label>2</label>
    </ligand>
</feature>
<feature type="binding site" evidence="1">
    <location>
        <position position="99"/>
    </location>
    <ligand>
        <name>Zn(2+)</name>
        <dbReference type="ChEBI" id="CHEBI:29105"/>
        <label>2</label>
    </ligand>
</feature>
<feature type="binding site" evidence="1">
    <location>
        <position position="107"/>
    </location>
    <ligand>
        <name>Zn(2+)</name>
        <dbReference type="ChEBI" id="CHEBI:29105"/>
        <label>2</label>
    </ligand>
</feature>
<feature type="binding site" evidence="1">
    <location>
        <position position="175"/>
    </location>
    <ligand>
        <name>NAD(+)</name>
        <dbReference type="ChEBI" id="CHEBI:57540"/>
    </ligand>
</feature>
<feature type="binding site" evidence="1">
    <location>
        <position position="195"/>
    </location>
    <ligand>
        <name>NAD(+)</name>
        <dbReference type="ChEBI" id="CHEBI:57540"/>
    </ligand>
</feature>
<feature type="binding site" evidence="1">
    <location>
        <position position="200"/>
    </location>
    <ligand>
        <name>NAD(+)</name>
        <dbReference type="ChEBI" id="CHEBI:57540"/>
    </ligand>
</feature>
<feature type="binding site" evidence="1">
    <location>
        <begin position="262"/>
        <end position="264"/>
    </location>
    <ligand>
        <name>NAD(+)</name>
        <dbReference type="ChEBI" id="CHEBI:57540"/>
    </ligand>
</feature>
<feature type="binding site" evidence="1">
    <location>
        <begin position="286"/>
        <end position="287"/>
    </location>
    <ligand>
        <name>NAD(+)</name>
        <dbReference type="ChEBI" id="CHEBI:57540"/>
    </ligand>
</feature>
<feature type="site" description="Important for catalytic activity for the proton relay mechanism but does not participate directly in the coordination of zinc atom" evidence="1">
    <location>
        <position position="148"/>
    </location>
</feature>
<name>TDH_AERS4</name>